<dbReference type="EC" id="3.6.1.41"/>
<dbReference type="EMBL" id="BX571965">
    <property type="protein sequence ID" value="CAH36695.1"/>
    <property type="molecule type" value="Genomic_DNA"/>
</dbReference>
<dbReference type="RefSeq" id="WP_004522249.1">
    <property type="nucleotide sequence ID" value="NZ_CP009538.1"/>
</dbReference>
<dbReference type="RefSeq" id="YP_109283.1">
    <property type="nucleotide sequence ID" value="NC_006350.1"/>
</dbReference>
<dbReference type="SMR" id="P0DMK2"/>
<dbReference type="STRING" id="272560.BPSL2687"/>
<dbReference type="KEGG" id="bps:BPSL2687"/>
<dbReference type="PATRIC" id="fig|272560.51.peg.2655"/>
<dbReference type="eggNOG" id="COG0639">
    <property type="taxonomic scope" value="Bacteria"/>
</dbReference>
<dbReference type="Proteomes" id="UP000000605">
    <property type="component" value="Chromosome 1"/>
</dbReference>
<dbReference type="GO" id="GO:0008803">
    <property type="term" value="F:bis(5'-nucleosyl)-tetraphosphatase (symmetrical) activity"/>
    <property type="evidence" value="ECO:0007669"/>
    <property type="project" value="UniProtKB-UniRule"/>
</dbReference>
<dbReference type="CDD" id="cd07422">
    <property type="entry name" value="MPP_ApaH"/>
    <property type="match status" value="1"/>
</dbReference>
<dbReference type="Gene3D" id="3.60.21.10">
    <property type="match status" value="1"/>
</dbReference>
<dbReference type="HAMAP" id="MF_00199">
    <property type="entry name" value="ApaH"/>
    <property type="match status" value="1"/>
</dbReference>
<dbReference type="InterPro" id="IPR004617">
    <property type="entry name" value="ApaH"/>
</dbReference>
<dbReference type="InterPro" id="IPR004843">
    <property type="entry name" value="Calcineurin-like_PHP_ApaH"/>
</dbReference>
<dbReference type="InterPro" id="IPR029052">
    <property type="entry name" value="Metallo-depent_PP-like"/>
</dbReference>
<dbReference type="NCBIfam" id="TIGR00668">
    <property type="entry name" value="apaH"/>
    <property type="match status" value="1"/>
</dbReference>
<dbReference type="NCBIfam" id="NF001204">
    <property type="entry name" value="PRK00166.1"/>
    <property type="match status" value="1"/>
</dbReference>
<dbReference type="PANTHER" id="PTHR40942">
    <property type="match status" value="1"/>
</dbReference>
<dbReference type="PANTHER" id="PTHR40942:SF4">
    <property type="entry name" value="CYTOCHROME C5"/>
    <property type="match status" value="1"/>
</dbReference>
<dbReference type="Pfam" id="PF00149">
    <property type="entry name" value="Metallophos"/>
    <property type="match status" value="1"/>
</dbReference>
<dbReference type="PIRSF" id="PIRSF000903">
    <property type="entry name" value="B5n-ttraPtase_sm"/>
    <property type="match status" value="1"/>
</dbReference>
<dbReference type="SUPFAM" id="SSF56300">
    <property type="entry name" value="Metallo-dependent phosphatases"/>
    <property type="match status" value="1"/>
</dbReference>
<organism>
    <name type="scientific">Burkholderia pseudomallei (strain K96243)</name>
    <dbReference type="NCBI Taxonomy" id="272560"/>
    <lineage>
        <taxon>Bacteria</taxon>
        <taxon>Pseudomonadati</taxon>
        <taxon>Pseudomonadota</taxon>
        <taxon>Betaproteobacteria</taxon>
        <taxon>Burkholderiales</taxon>
        <taxon>Burkholderiaceae</taxon>
        <taxon>Burkholderia</taxon>
        <taxon>pseudomallei group</taxon>
    </lineage>
</organism>
<gene>
    <name type="primary">apaH</name>
    <name type="ordered locus">BPSL2687</name>
</gene>
<accession>P0DMK2</accession>
<accession>O69115</accession>
<accession>Q63RI5</accession>
<comment type="function">
    <text evidence="1">Hydrolyzes diadenosine 5',5'''-P1,P4-tetraphosphate to yield ADP.</text>
</comment>
<comment type="catalytic activity">
    <reaction>
        <text>P(1),P(4)-bis(5'-adenosyl) tetraphosphate + H2O = 2 ADP + 2 H(+)</text>
        <dbReference type="Rhea" id="RHEA:24252"/>
        <dbReference type="ChEBI" id="CHEBI:15377"/>
        <dbReference type="ChEBI" id="CHEBI:15378"/>
        <dbReference type="ChEBI" id="CHEBI:58141"/>
        <dbReference type="ChEBI" id="CHEBI:456216"/>
        <dbReference type="EC" id="3.6.1.41"/>
    </reaction>
</comment>
<comment type="similarity">
    <text evidence="2">Belongs to the Ap4A hydrolase family.</text>
</comment>
<name>APAH_BURPS</name>
<reference key="1">
    <citation type="journal article" date="2004" name="Proc. Natl. Acad. Sci. U.S.A.">
        <title>Genomic plasticity of the causative agent of melioidosis, Burkholderia pseudomallei.</title>
        <authorList>
            <person name="Holden M.T.G."/>
            <person name="Titball R.W."/>
            <person name="Peacock S.J."/>
            <person name="Cerdeno-Tarraga A.-M."/>
            <person name="Atkins T."/>
            <person name="Crossman L.C."/>
            <person name="Pitt T."/>
            <person name="Churcher C."/>
            <person name="Mungall K.L."/>
            <person name="Bentley S.D."/>
            <person name="Sebaihia M."/>
            <person name="Thomson N.R."/>
            <person name="Bason N."/>
            <person name="Beacham I.R."/>
            <person name="Brooks K."/>
            <person name="Brown K.A."/>
            <person name="Brown N.F."/>
            <person name="Challis G.L."/>
            <person name="Cherevach I."/>
            <person name="Chillingworth T."/>
            <person name="Cronin A."/>
            <person name="Crossett B."/>
            <person name="Davis P."/>
            <person name="DeShazer D."/>
            <person name="Feltwell T."/>
            <person name="Fraser A."/>
            <person name="Hance Z."/>
            <person name="Hauser H."/>
            <person name="Holroyd S."/>
            <person name="Jagels K."/>
            <person name="Keith K.E."/>
            <person name="Maddison M."/>
            <person name="Moule S."/>
            <person name="Price C."/>
            <person name="Quail M.A."/>
            <person name="Rabbinowitsch E."/>
            <person name="Rutherford K."/>
            <person name="Sanders M."/>
            <person name="Simmonds M."/>
            <person name="Songsivilai S."/>
            <person name="Stevens K."/>
            <person name="Tumapa S."/>
            <person name="Vesaratchavest M."/>
            <person name="Whitehead S."/>
            <person name="Yeats C."/>
            <person name="Barrell B.G."/>
            <person name="Oyston P.C.F."/>
            <person name="Parkhill J."/>
        </authorList>
    </citation>
    <scope>NUCLEOTIDE SEQUENCE [LARGE SCALE GENOMIC DNA]</scope>
    <source>
        <strain>K96243</strain>
    </source>
</reference>
<feature type="chain" id="PRO_0000197985" description="Bis(5'-nucleosyl)-tetraphosphatase, symmetrical">
    <location>
        <begin position="1"/>
        <end position="282"/>
    </location>
</feature>
<sequence>MTNFSSSPPIAFGDLQGCHAAYRQLFDTLAPAADTPLWFAGDLVNRGPASLATLREIVALGERAIAVLGNHDLHLLAVAAGIRTLKPGDTIGEILDAPDADDLIEWVRHRPFAHFERGMLMVHAGLLPQWDAALALELADELQRALRAPNWRDTLRSLYGNDPNCWSPDLKHADRLRVAFNAFTRIRFCTPEGAMEFRANGGPAAAPAGYLPWFDAPGRKTADVTVVFGHWAALGLMLRENLVALDSGCVWGNRLSAVRLADDPAARVVTQVACERCGAADE</sequence>
<evidence type="ECO:0000250" key="1"/>
<evidence type="ECO:0000305" key="2"/>
<protein>
    <recommendedName>
        <fullName>Bis(5'-nucleosyl)-tetraphosphatase, symmetrical</fullName>
        <ecNumber>3.6.1.41</ecNumber>
    </recommendedName>
    <alternativeName>
        <fullName>Ap4A hydrolase</fullName>
    </alternativeName>
    <alternativeName>
        <fullName>Diadenosine 5',5'''-P1,P4-tetraphosphate pyrophosphohydrolase</fullName>
    </alternativeName>
    <alternativeName>
        <fullName>Diadenosine tetraphosphatase</fullName>
    </alternativeName>
</protein>
<proteinExistence type="inferred from homology"/>
<keyword id="KW-0378">Hydrolase</keyword>
<keyword id="KW-1185">Reference proteome</keyword>